<feature type="chain" id="PRO_1000010405" description="Heat-inducible transcription repressor HrcA">
    <location>
        <begin position="1"/>
        <end position="345"/>
    </location>
</feature>
<evidence type="ECO:0000255" key="1">
    <source>
        <dbReference type="HAMAP-Rule" id="MF_00081"/>
    </source>
</evidence>
<comment type="function">
    <text evidence="1">Negative regulator of class I heat shock genes (grpE-dnaK-dnaJ and groELS operons). Prevents heat-shock induction of these operons.</text>
</comment>
<comment type="similarity">
    <text evidence="1">Belongs to the HrcA family.</text>
</comment>
<protein>
    <recommendedName>
        <fullName evidence="1">Heat-inducible transcription repressor HrcA</fullName>
    </recommendedName>
</protein>
<proteinExistence type="inferred from homology"/>
<sequence length="345" mass="39206">MLTSRAEIILRSIVRQYITKAVPVSSSSILEDCGLDICSATIRNEVVRLEIEGYILRPHHSAGSIPADKGYRYYVESLKDVELPTNDKFLIRHLFHQVEKEMEEWLNLTVAVLSQRVQSMAVVTMPRQTQGKVHHIELVSLQDNLVLVVLILRGAKVKQQLVNFENVVSQPELTLISNRLNDAYDGLTRFQIEQKPLGLNHDELKVKDSLVKMMRGEDEQESREPFFDGLHYMLEQPEFHQNQRAQEIMQLLEQKKLSKMIVPPMPFNRGVQVYIGQENASAEIRDYSLIVSQYGIPDEAVGTIGVIGPTRMAYERALSAVSYLSLVMSTLVAELYGKAPVDKDE</sequence>
<organism>
    <name type="scientific">Dehalococcoides mccartyi (strain CBDB1)</name>
    <dbReference type="NCBI Taxonomy" id="255470"/>
    <lineage>
        <taxon>Bacteria</taxon>
        <taxon>Bacillati</taxon>
        <taxon>Chloroflexota</taxon>
        <taxon>Dehalococcoidia</taxon>
        <taxon>Dehalococcoidales</taxon>
        <taxon>Dehalococcoidaceae</taxon>
        <taxon>Dehalococcoides</taxon>
    </lineage>
</organism>
<accession>Q3ZYU9</accession>
<reference key="1">
    <citation type="journal article" date="2005" name="Nat. Biotechnol.">
        <title>Genome sequence of the chlorinated compound-respiring bacterium Dehalococcoides species strain CBDB1.</title>
        <authorList>
            <person name="Kube M."/>
            <person name="Beck A."/>
            <person name="Zinder S.H."/>
            <person name="Kuhl H."/>
            <person name="Reinhardt R."/>
            <person name="Adrian L."/>
        </authorList>
    </citation>
    <scope>NUCLEOTIDE SEQUENCE [LARGE SCALE GENOMIC DNA]</scope>
    <source>
        <strain>CBDB1</strain>
    </source>
</reference>
<dbReference type="EMBL" id="AJ965256">
    <property type="protein sequence ID" value="CAI83409.1"/>
    <property type="molecule type" value="Genomic_DNA"/>
</dbReference>
<dbReference type="RefSeq" id="WP_011309760.1">
    <property type="nucleotide sequence ID" value="NC_007356.1"/>
</dbReference>
<dbReference type="SMR" id="Q3ZYU9"/>
<dbReference type="KEGG" id="deh:cbdbA1361"/>
<dbReference type="HOGENOM" id="CLU_050019_0_0_0"/>
<dbReference type="Proteomes" id="UP000000433">
    <property type="component" value="Chromosome"/>
</dbReference>
<dbReference type="GO" id="GO:0003677">
    <property type="term" value="F:DNA binding"/>
    <property type="evidence" value="ECO:0007669"/>
    <property type="project" value="InterPro"/>
</dbReference>
<dbReference type="GO" id="GO:0045892">
    <property type="term" value="P:negative regulation of DNA-templated transcription"/>
    <property type="evidence" value="ECO:0007669"/>
    <property type="project" value="UniProtKB-UniRule"/>
</dbReference>
<dbReference type="Gene3D" id="3.30.450.40">
    <property type="match status" value="1"/>
</dbReference>
<dbReference type="Gene3D" id="3.30.390.60">
    <property type="entry name" value="Heat-inducible transcription repressor hrca homolog, domain 3"/>
    <property type="match status" value="1"/>
</dbReference>
<dbReference type="Gene3D" id="1.10.10.10">
    <property type="entry name" value="Winged helix-like DNA-binding domain superfamily/Winged helix DNA-binding domain"/>
    <property type="match status" value="1"/>
</dbReference>
<dbReference type="HAMAP" id="MF_00081">
    <property type="entry name" value="HrcA"/>
    <property type="match status" value="1"/>
</dbReference>
<dbReference type="InterPro" id="IPR029016">
    <property type="entry name" value="GAF-like_dom_sf"/>
</dbReference>
<dbReference type="InterPro" id="IPR002571">
    <property type="entry name" value="HrcA"/>
</dbReference>
<dbReference type="InterPro" id="IPR021153">
    <property type="entry name" value="HrcA_C"/>
</dbReference>
<dbReference type="InterPro" id="IPR036388">
    <property type="entry name" value="WH-like_DNA-bd_sf"/>
</dbReference>
<dbReference type="InterPro" id="IPR036390">
    <property type="entry name" value="WH_DNA-bd_sf"/>
</dbReference>
<dbReference type="InterPro" id="IPR023120">
    <property type="entry name" value="WHTH_transcript_rep_HrcA_IDD"/>
</dbReference>
<dbReference type="NCBIfam" id="TIGR00331">
    <property type="entry name" value="hrcA"/>
    <property type="match status" value="1"/>
</dbReference>
<dbReference type="PANTHER" id="PTHR34824">
    <property type="entry name" value="HEAT-INDUCIBLE TRANSCRIPTION REPRESSOR HRCA"/>
    <property type="match status" value="1"/>
</dbReference>
<dbReference type="PANTHER" id="PTHR34824:SF1">
    <property type="entry name" value="HEAT-INDUCIBLE TRANSCRIPTION REPRESSOR HRCA"/>
    <property type="match status" value="1"/>
</dbReference>
<dbReference type="Pfam" id="PF01628">
    <property type="entry name" value="HrcA"/>
    <property type="match status" value="1"/>
</dbReference>
<dbReference type="PIRSF" id="PIRSF005485">
    <property type="entry name" value="HrcA"/>
    <property type="match status" value="1"/>
</dbReference>
<dbReference type="SUPFAM" id="SSF55781">
    <property type="entry name" value="GAF domain-like"/>
    <property type="match status" value="1"/>
</dbReference>
<dbReference type="SUPFAM" id="SSF46785">
    <property type="entry name" value="Winged helix' DNA-binding domain"/>
    <property type="match status" value="1"/>
</dbReference>
<keyword id="KW-0678">Repressor</keyword>
<keyword id="KW-0346">Stress response</keyword>
<keyword id="KW-0804">Transcription</keyword>
<keyword id="KW-0805">Transcription regulation</keyword>
<gene>
    <name evidence="1" type="primary">hrcA</name>
    <name type="ordered locus">cbdbA1361</name>
</gene>
<name>HRCA_DEHMC</name>